<gene>
    <name evidence="4" type="primary">etfA</name>
    <name evidence="6" type="ordered locus">Csal_0992</name>
</gene>
<reference key="1">
    <citation type="journal article" date="2011" name="Stand. Genomic Sci.">
        <title>Complete genome sequence of the halophilic and highly halotolerant Chromohalobacter salexigens type strain (1H11(T)).</title>
        <authorList>
            <person name="Copeland A."/>
            <person name="O'Connor K."/>
            <person name="Lucas S."/>
            <person name="Lapidus A."/>
            <person name="Berry K.W."/>
            <person name="Detter J.C."/>
            <person name="Del Rio T.G."/>
            <person name="Hammon N."/>
            <person name="Dalin E."/>
            <person name="Tice H."/>
            <person name="Pitluck S."/>
            <person name="Bruce D."/>
            <person name="Goodwin L."/>
            <person name="Han C."/>
            <person name="Tapia R."/>
            <person name="Saunders E."/>
            <person name="Schmutz J."/>
            <person name="Brettin T."/>
            <person name="Larimer F."/>
            <person name="Land M."/>
            <person name="Hauser L."/>
            <person name="Vargas C."/>
            <person name="Nieto J.J."/>
            <person name="Kyrpides N.C."/>
            <person name="Ivanova N."/>
            <person name="Goker M."/>
            <person name="Klenk H.P."/>
            <person name="Csonka L.N."/>
            <person name="Woyke T."/>
        </authorList>
    </citation>
    <scope>NUCLEOTIDE SEQUENCE [LARGE SCALE GENOMIC DNA]</scope>
    <source>
        <strain>ATCC BAA-138 / DSM 3043 / CIP 106854 / NCIMB 13768 / 1H11</strain>
    </source>
</reference>
<reference key="2">
    <citation type="journal article" date="2020" name="Appl. Environ. Microbiol.">
        <title>Role of N,N-dimethylglycine and its catabolism to sarcosine in Chromohalobacter salexigens DSM 3043.</title>
        <authorList>
            <person name="Yang T."/>
            <person name="Shao Y.H."/>
            <person name="Guo L.Z."/>
            <person name="Meng X.L."/>
            <person name="Yu H."/>
            <person name="Lu W.D."/>
        </authorList>
    </citation>
    <scope>FUNCTION</scope>
    <scope>DISRUPTION PHENOTYPE</scope>
    <source>
        <strain>ATCC BAA-138 / DSM 3043 / CIP 106854 / NCIMB 13768 / 1H11</strain>
    </source>
</reference>
<accession>Q1QYV9</accession>
<proteinExistence type="inferred from homology"/>
<sequence>MSQLPRRDPRQEWIARNRLHPRHEEVLAALGQGATSEWPGPNGLMRKNPHRVGFIGPNGIKRIDRSGTQQGAGGGKASASVAGHKPLTEIAEPAFLVAVVPDMTGGRLSGHDKDLLGLARRLADADPAAQGAVLAVVFGSHKETNLGEAGVDRLLHLDSPEIAGYAPEARVGALITVEQAWTPRHWLLPDSKLGGGELGRRLAARLGERPATGIWQVEADAESATGWQCTARGAAGSLDIRRPLPRIALALAECAEPVSETRHTAAELVLPQPLPSTLSRIQDLGQVSVDPASVALSEAEFILAAGNGVRDWDAYHRAASVLGATEGASRVAVDEGYMPRDRQVGATGTWVTARVYIAVGISGAIQHLQGIQPCEKVIAINMDPSCDMIKRADLAVIGDSTQILEALVTLVSQAREEKRDAA</sequence>
<keyword id="KW-0249">Electron transport</keyword>
<keyword id="KW-0274">FAD</keyword>
<keyword id="KW-0285">Flavoprotein</keyword>
<keyword id="KW-1185">Reference proteome</keyword>
<keyword id="KW-0813">Transport</keyword>
<comment type="function">
    <text evidence="3">Participates in the electron transfer process during N,N-dimethylglycine (DMG) degradation to sarcosine.</text>
</comment>
<comment type="cofactor">
    <cofactor evidence="1">
        <name>FAD</name>
        <dbReference type="ChEBI" id="CHEBI:57692"/>
    </cofactor>
    <text evidence="1">Binds 1 FAD per dimer.</text>
</comment>
<comment type="subunit">
    <text evidence="1">Heterodimer of an alpha and a beta subunit.</text>
</comment>
<comment type="disruption phenotype">
    <text evidence="3">Deletion mutant loses its ability to grow using DMG as the sole nitrogen source but is still capable of utilizing sarcosine and glycine as the sole nitrogen source.</text>
</comment>
<comment type="similarity">
    <text evidence="5">Belongs to the ETF alpha-subunit/FixB family.</text>
</comment>
<dbReference type="EMBL" id="CP000285">
    <property type="protein sequence ID" value="ABE58349.1"/>
    <property type="molecule type" value="Genomic_DNA"/>
</dbReference>
<dbReference type="RefSeq" id="WP_011506295.1">
    <property type="nucleotide sequence ID" value="NC_007963.1"/>
</dbReference>
<dbReference type="SMR" id="Q1QYV9"/>
<dbReference type="STRING" id="290398.Csal_0992"/>
<dbReference type="GeneID" id="95333747"/>
<dbReference type="KEGG" id="csa:Csal_0992"/>
<dbReference type="eggNOG" id="COG2025">
    <property type="taxonomic scope" value="Bacteria"/>
</dbReference>
<dbReference type="HOGENOM" id="CLU_034178_4_0_6"/>
<dbReference type="OrthoDB" id="8584059at2"/>
<dbReference type="Proteomes" id="UP000000239">
    <property type="component" value="Chromosome"/>
</dbReference>
<dbReference type="GO" id="GO:0009055">
    <property type="term" value="F:electron transfer activity"/>
    <property type="evidence" value="ECO:0007669"/>
    <property type="project" value="InterPro"/>
</dbReference>
<dbReference type="GO" id="GO:0050660">
    <property type="term" value="F:flavin adenine dinucleotide binding"/>
    <property type="evidence" value="ECO:0007669"/>
    <property type="project" value="InterPro"/>
</dbReference>
<dbReference type="GO" id="GO:0033539">
    <property type="term" value="P:fatty acid beta-oxidation using acyl-CoA dehydrogenase"/>
    <property type="evidence" value="ECO:0007669"/>
    <property type="project" value="TreeGrafter"/>
</dbReference>
<dbReference type="Gene3D" id="3.40.50.620">
    <property type="entry name" value="HUPs"/>
    <property type="match status" value="1"/>
</dbReference>
<dbReference type="Gene3D" id="3.40.50.1220">
    <property type="entry name" value="TPP-binding domain"/>
    <property type="match status" value="1"/>
</dbReference>
<dbReference type="InterPro" id="IPR029035">
    <property type="entry name" value="DHS-like_NAD/FAD-binding_dom"/>
</dbReference>
<dbReference type="InterPro" id="IPR014730">
    <property type="entry name" value="ETF_a/b_N"/>
</dbReference>
<dbReference type="InterPro" id="IPR001308">
    <property type="entry name" value="ETF_a/FixB"/>
</dbReference>
<dbReference type="InterPro" id="IPR014731">
    <property type="entry name" value="ETF_asu_C"/>
</dbReference>
<dbReference type="InterPro" id="IPR014729">
    <property type="entry name" value="Rossmann-like_a/b/a_fold"/>
</dbReference>
<dbReference type="PANTHER" id="PTHR43153">
    <property type="entry name" value="ELECTRON TRANSFER FLAVOPROTEIN ALPHA"/>
    <property type="match status" value="1"/>
</dbReference>
<dbReference type="PANTHER" id="PTHR43153:SF1">
    <property type="entry name" value="ELECTRON TRANSFER FLAVOPROTEIN SUBUNIT ALPHA, MITOCHONDRIAL"/>
    <property type="match status" value="1"/>
</dbReference>
<dbReference type="Pfam" id="PF01012">
    <property type="entry name" value="ETF"/>
    <property type="match status" value="1"/>
</dbReference>
<dbReference type="Pfam" id="PF00766">
    <property type="entry name" value="ETF_alpha"/>
    <property type="match status" value="1"/>
</dbReference>
<dbReference type="SMART" id="SM00893">
    <property type="entry name" value="ETF"/>
    <property type="match status" value="1"/>
</dbReference>
<dbReference type="SUPFAM" id="SSF52402">
    <property type="entry name" value="Adenine nucleotide alpha hydrolases-like"/>
    <property type="match status" value="1"/>
</dbReference>
<dbReference type="SUPFAM" id="SSF52467">
    <property type="entry name" value="DHS-like NAD/FAD-binding domain"/>
    <property type="match status" value="1"/>
</dbReference>
<name>ETFA_CHRSD</name>
<evidence type="ECO:0000250" key="1">
    <source>
        <dbReference type="UniProtKB" id="P53571"/>
    </source>
</evidence>
<evidence type="ECO:0000256" key="2">
    <source>
        <dbReference type="SAM" id="MobiDB-lite"/>
    </source>
</evidence>
<evidence type="ECO:0000269" key="3">
    <source>
    </source>
</evidence>
<evidence type="ECO:0000303" key="4">
    <source>
    </source>
</evidence>
<evidence type="ECO:0000305" key="5"/>
<evidence type="ECO:0000312" key="6">
    <source>
        <dbReference type="EMBL" id="ABE58349.1"/>
    </source>
</evidence>
<feature type="chain" id="PRO_0000459078" description="Electron transfer flavoprotein subunit alpha">
    <location>
        <begin position="1"/>
        <end position="422"/>
    </location>
</feature>
<feature type="region of interest" description="Disordered" evidence="2">
    <location>
        <begin position="61"/>
        <end position="80"/>
    </location>
</feature>
<feature type="binding site" evidence="1">
    <location>
        <begin position="329"/>
        <end position="330"/>
    </location>
    <ligand>
        <name>FAD</name>
        <dbReference type="ChEBI" id="CHEBI:57692"/>
    </ligand>
</feature>
<feature type="binding site" evidence="1">
    <location>
        <begin position="343"/>
        <end position="347"/>
    </location>
    <ligand>
        <name>FAD</name>
        <dbReference type="ChEBI" id="CHEBI:57692"/>
    </ligand>
</feature>
<feature type="binding site" evidence="1">
    <location>
        <begin position="360"/>
        <end position="367"/>
    </location>
    <ligand>
        <name>FAD</name>
        <dbReference type="ChEBI" id="CHEBI:57692"/>
    </ligand>
</feature>
<feature type="binding site" evidence="1">
    <location>
        <position position="381"/>
    </location>
    <ligand>
        <name>FAD</name>
        <dbReference type="ChEBI" id="CHEBI:57692"/>
    </ligand>
</feature>
<protein>
    <recommendedName>
        <fullName evidence="5">Electron transfer flavoprotein subunit alpha</fullName>
        <shortName evidence="5">Alpha-ETF</shortName>
    </recommendedName>
</protein>
<organism>
    <name type="scientific">Chromohalobacter salexigens (strain ATCC BAA-138 / DSM 3043 / CIP 106854 / NCIMB 13768 / 1H11)</name>
    <dbReference type="NCBI Taxonomy" id="290398"/>
    <lineage>
        <taxon>Bacteria</taxon>
        <taxon>Pseudomonadati</taxon>
        <taxon>Pseudomonadota</taxon>
        <taxon>Gammaproteobacteria</taxon>
        <taxon>Oceanospirillales</taxon>
        <taxon>Halomonadaceae</taxon>
        <taxon>Chromohalobacter</taxon>
    </lineage>
</organism>